<gene>
    <name evidence="1 6" type="primary">mutS2</name>
    <name evidence="1" type="synonym">rqcU</name>
    <name type="ordered locus">TTHA1645</name>
</gene>
<name>MUTS2_THET8</name>
<proteinExistence type="evidence at protein level"/>
<keyword id="KW-0002">3D-structure</keyword>
<keyword id="KW-0067">ATP-binding</keyword>
<keyword id="KW-0903">Direct protein sequencing</keyword>
<keyword id="KW-0238">DNA-binding</keyword>
<keyword id="KW-0255">Endonuclease</keyword>
<keyword id="KW-0378">Hydrolase</keyword>
<keyword id="KW-0540">Nuclease</keyword>
<keyword id="KW-0547">Nucleotide-binding</keyword>
<keyword id="KW-1185">Reference proteome</keyword>
<keyword id="KW-0694">RNA-binding</keyword>
<keyword id="KW-0699">rRNA-binding</keyword>
<sequence>MRDVLEVLEFPRVRALLAERAKTPLGRELALALAPLPREEAEKRHELTGEALSYPYALPEAGTLREAYGRALAGARLSGPELLKAAKALEEAMALKEELLPLKNALSQVAEGIGDHTPFLERVRKALDEEGAVKDEASPRLAQIRRELRPLRQQILDRLYALMDRHREAFQDRFVTLRRERYCVPVRAGMAQKVPGILLDESESGATLFIEPFSVVKLNNRLQALRLKEEEEVNRILRDLSERLAKDEGVPKTLEALGLLDLVQAQAALARDLGLSRPAFGERYELYRAFHPLIPDAVRNSFALDEKNRILLISGPNMGGKTALLKTLGLAVLMAQSGLFVAAEKALLAWPDRVYADIGDEQSLQENLSTFAGHLRRLREMLEEATSHSLVLIDELGSGTDPEEGAALSQAILEALLERGVKGMVTTHLSPLKAFAQGREGIQNASMRFDLEALRPTYELVLGVPGRSYALAIARRLALPEEVLKRAEALLPEGGRLEALLERLEAERLALEAERERLRRELSQVERLRKALAEREARFEEERAERLKALEEEVRAELLKVEAELKALKEKARTEGKRDALRELMALRERYAKKAPPPPPPPGLAPGVLVEVPSLGKRGRVVELRGEEVLVQVGPLKMSLKPQEVKPLPEAEPGKPLLAKPRREVKEVDLRGLTVAEALLEVDQALEEARALGLSTLRLLHGKGTGALRQAIREALRRDKRVESFADAPPGEGGHGVTVVALRP</sequence>
<protein>
    <recommendedName>
        <fullName evidence="1 6">Endonuclease MutS2</fullName>
        <ecNumber evidence="4">3.1.12.-</ecNumber>
    </recommendedName>
    <alternativeName>
        <fullName evidence="1">Ribosome-associated protein quality control-upstream factor</fullName>
        <shortName evidence="1">RQC-upstream factor</shortName>
        <shortName evidence="1">RqcU</shortName>
        <ecNumber evidence="1 2 3">3.6.4.-</ecNumber>
    </alternativeName>
</protein>
<organism>
    <name type="scientific">Thermus thermophilus (strain ATCC 27634 / DSM 579 / HB8)</name>
    <dbReference type="NCBI Taxonomy" id="300852"/>
    <lineage>
        <taxon>Bacteria</taxon>
        <taxon>Thermotogati</taxon>
        <taxon>Deinococcota</taxon>
        <taxon>Deinococci</taxon>
        <taxon>Thermales</taxon>
        <taxon>Thermaceae</taxon>
        <taxon>Thermus</taxon>
    </lineage>
</organism>
<reference key="1">
    <citation type="submission" date="2004-11" db="EMBL/GenBank/DDBJ databases">
        <title>Complete genome sequence of Thermus thermophilus HB8.</title>
        <authorList>
            <person name="Masui R."/>
            <person name="Kurokawa K."/>
            <person name="Nakagawa N."/>
            <person name="Tokunaga F."/>
            <person name="Koyama Y."/>
            <person name="Shibata T."/>
            <person name="Oshima T."/>
            <person name="Yokoyama S."/>
            <person name="Yasunaga T."/>
            <person name="Kuramitsu S."/>
        </authorList>
    </citation>
    <scope>NUCLEOTIDE SEQUENCE [LARGE SCALE GENOMIC DNA]</scope>
    <source>
        <strain>ATCC 27634 / DSM 579 / HB8</strain>
    </source>
</reference>
<reference key="2">
    <citation type="journal article" date="2004" name="J. Biochem.">
        <title>Thermus thermophilus MutS2, a MutS paralogue, possesses an endonuclease activity promoted by MutL.</title>
        <authorList>
            <person name="Fukui K."/>
            <person name="Masui R."/>
            <person name="Kuramitsu S."/>
        </authorList>
    </citation>
    <scope>PROTEIN SEQUENCE OF 1-8</scope>
    <scope>FUNCTION</scope>
    <scope>ATPASE ACTIVITY</scope>
    <scope>NUCLEASE ACTIVITY</scope>
    <scope>DNA-BINDING</scope>
    <scope>ACTIVITY REGULATION</scope>
    <scope>INTERACTION WITH MUTL</scope>
    <scope>SUBUNIT</scope>
    <source>
        <strain>ATCC 27634 / DSM 579 / HB8</strain>
    </source>
</reference>
<reference key="3">
    <citation type="journal article" date="2007" name="Nucleic Acids Res.">
        <title>Nuclease activity of the MutS homologue MutS2 from Thermus thermophilus is confined to the Smr domain.</title>
        <authorList>
            <person name="Fukui K."/>
            <person name="Kosaka H."/>
            <person name="Kuramitsu S."/>
            <person name="Masui R."/>
        </authorList>
    </citation>
    <scope>FUNCTION</scope>
    <scope>NUCLEASE ACTIVITY</scope>
    <scope>ATPASE ACTIVITY</scope>
    <scope>DNA-BINDING</scope>
    <scope>BIOPHYSICOCHEMICAL PROPERTIES</scope>
    <scope>SUBUNIT</scope>
    <scope>DOMAIN</scope>
    <scope>MUTAGENESIS OF HIS-701</scope>
    <source>
        <strain>ATCC 27634 / DSM 579 / HB8</strain>
    </source>
</reference>
<reference key="4">
    <citation type="journal article" date="2007" name="Nucleic Acids Res.">
        <title>Analysis of a nuclease activity of catalytic domain of Thermus thermophilus MutS2 by high-accuracy mass spectrometry.</title>
        <authorList>
            <person name="Fukui K."/>
            <person name="Takahata Y."/>
            <person name="Nakagawa N."/>
            <person name="Kuramitsu S."/>
            <person name="Masui R."/>
        </authorList>
    </citation>
    <scope>FUNCTION AS AN ENDONUCLEASE</scope>
    <scope>CATALYTIC ACTIVITY</scope>
    <scope>DOMAIN</scope>
</reference>
<reference key="5">
    <citation type="journal article" date="2008" name="J. Biol. Chem.">
        <title>Crystal structure of MutS2 endonuclease domain and the mechanism of homologous recombination suppression.</title>
        <authorList>
            <person name="Fukui K."/>
            <person name="Nakagawa N."/>
            <person name="Kitamura Y."/>
            <person name="Nishida Y."/>
            <person name="Masui R."/>
            <person name="Kuramitsu S."/>
        </authorList>
    </citation>
    <scope>X-RAY CRYSTALLOGRAPHY (1.70 ANGSTROMS) OF 663-744</scope>
    <scope>FUNCTION</scope>
    <scope>DISRUPTION PHENOTYPE</scope>
</reference>
<accession>Q5SHT5</accession>
<dbReference type="EC" id="3.1.12.-" evidence="4"/>
<dbReference type="EC" id="3.6.4.-" evidence="1 2 3"/>
<dbReference type="EMBL" id="AP008226">
    <property type="protein sequence ID" value="BAD71468.1"/>
    <property type="molecule type" value="Genomic_DNA"/>
</dbReference>
<dbReference type="RefSeq" id="WP_011228829.1">
    <property type="nucleotide sequence ID" value="NC_006461.1"/>
</dbReference>
<dbReference type="RefSeq" id="YP_144911.1">
    <property type="nucleotide sequence ID" value="NC_006461.1"/>
</dbReference>
<dbReference type="PDB" id="2ZQE">
    <property type="method" value="X-ray"/>
    <property type="resolution" value="1.70 A"/>
    <property type="chains" value="A=663-744"/>
</dbReference>
<dbReference type="PDB" id="7VUF">
    <property type="method" value="X-ray"/>
    <property type="resolution" value="3.11 A"/>
    <property type="chains" value="A/B/C/D=1-488"/>
</dbReference>
<dbReference type="PDB" id="7VUK">
    <property type="method" value="X-ray"/>
    <property type="resolution" value="3.38 A"/>
    <property type="chains" value="A/B=1-488"/>
</dbReference>
<dbReference type="PDBsum" id="2ZQE"/>
<dbReference type="PDBsum" id="7VUF"/>
<dbReference type="PDBsum" id="7VUK"/>
<dbReference type="SMR" id="Q5SHT5"/>
<dbReference type="EnsemblBacteria" id="BAD71468">
    <property type="protein sequence ID" value="BAD71468"/>
    <property type="gene ID" value="BAD71468"/>
</dbReference>
<dbReference type="GeneID" id="3169358"/>
<dbReference type="KEGG" id="ttj:TTHA1645"/>
<dbReference type="eggNOG" id="COG1193">
    <property type="taxonomic scope" value="Bacteria"/>
</dbReference>
<dbReference type="HOGENOM" id="CLU_011252_2_1_0"/>
<dbReference type="PhylomeDB" id="Q5SHT5"/>
<dbReference type="EvolutionaryTrace" id="Q5SHT5"/>
<dbReference type="Proteomes" id="UP000000532">
    <property type="component" value="Chromosome"/>
</dbReference>
<dbReference type="GO" id="GO:0005524">
    <property type="term" value="F:ATP binding"/>
    <property type="evidence" value="ECO:0007669"/>
    <property type="project" value="UniProtKB-UniRule"/>
</dbReference>
<dbReference type="GO" id="GO:0016887">
    <property type="term" value="F:ATP hydrolysis activity"/>
    <property type="evidence" value="ECO:0007669"/>
    <property type="project" value="InterPro"/>
</dbReference>
<dbReference type="GO" id="GO:0140664">
    <property type="term" value="F:ATP-dependent DNA damage sensor activity"/>
    <property type="evidence" value="ECO:0007669"/>
    <property type="project" value="InterPro"/>
</dbReference>
<dbReference type="GO" id="GO:0004519">
    <property type="term" value="F:endonuclease activity"/>
    <property type="evidence" value="ECO:0007669"/>
    <property type="project" value="UniProtKB-UniRule"/>
</dbReference>
<dbReference type="GO" id="GO:0030983">
    <property type="term" value="F:mismatched DNA binding"/>
    <property type="evidence" value="ECO:0007669"/>
    <property type="project" value="InterPro"/>
</dbReference>
<dbReference type="GO" id="GO:0043023">
    <property type="term" value="F:ribosomal large subunit binding"/>
    <property type="evidence" value="ECO:0007669"/>
    <property type="project" value="UniProtKB-UniRule"/>
</dbReference>
<dbReference type="GO" id="GO:0019843">
    <property type="term" value="F:rRNA binding"/>
    <property type="evidence" value="ECO:0007669"/>
    <property type="project" value="UniProtKB-UniRule"/>
</dbReference>
<dbReference type="GO" id="GO:0006298">
    <property type="term" value="P:mismatch repair"/>
    <property type="evidence" value="ECO:0007669"/>
    <property type="project" value="InterPro"/>
</dbReference>
<dbReference type="GO" id="GO:0045910">
    <property type="term" value="P:negative regulation of DNA recombination"/>
    <property type="evidence" value="ECO:0007669"/>
    <property type="project" value="InterPro"/>
</dbReference>
<dbReference type="GO" id="GO:0072344">
    <property type="term" value="P:rescue of stalled ribosome"/>
    <property type="evidence" value="ECO:0007669"/>
    <property type="project" value="UniProtKB-UniRule"/>
</dbReference>
<dbReference type="FunFam" id="3.30.1370.110:FF:000004">
    <property type="entry name" value="Endonuclease MutS2"/>
    <property type="match status" value="1"/>
</dbReference>
<dbReference type="FunFam" id="3.40.50.300:FF:000830">
    <property type="entry name" value="Endonuclease MutS2"/>
    <property type="match status" value="1"/>
</dbReference>
<dbReference type="Gene3D" id="3.30.1370.110">
    <property type="match status" value="1"/>
</dbReference>
<dbReference type="Gene3D" id="3.40.50.300">
    <property type="entry name" value="P-loop containing nucleotide triphosphate hydrolases"/>
    <property type="match status" value="1"/>
</dbReference>
<dbReference type="HAMAP" id="MF_00092">
    <property type="entry name" value="MutS2"/>
    <property type="match status" value="1"/>
</dbReference>
<dbReference type="InterPro" id="IPR003593">
    <property type="entry name" value="AAA+_ATPase"/>
</dbReference>
<dbReference type="InterPro" id="IPR000432">
    <property type="entry name" value="DNA_mismatch_repair_MutS_C"/>
</dbReference>
<dbReference type="InterPro" id="IPR007696">
    <property type="entry name" value="DNA_mismatch_repair_MutS_core"/>
</dbReference>
<dbReference type="InterPro" id="IPR036187">
    <property type="entry name" value="DNA_mismatch_repair_MutS_sf"/>
</dbReference>
<dbReference type="InterPro" id="IPR046893">
    <property type="entry name" value="MSSS"/>
</dbReference>
<dbReference type="InterPro" id="IPR045076">
    <property type="entry name" value="MutS"/>
</dbReference>
<dbReference type="InterPro" id="IPR005747">
    <property type="entry name" value="MutS2"/>
</dbReference>
<dbReference type="InterPro" id="IPR027417">
    <property type="entry name" value="P-loop_NTPase"/>
</dbReference>
<dbReference type="InterPro" id="IPR002625">
    <property type="entry name" value="Smr_dom"/>
</dbReference>
<dbReference type="InterPro" id="IPR036063">
    <property type="entry name" value="Smr_dom_sf"/>
</dbReference>
<dbReference type="NCBIfam" id="TIGR01069">
    <property type="entry name" value="mutS2"/>
    <property type="match status" value="1"/>
</dbReference>
<dbReference type="PANTHER" id="PTHR48466">
    <property type="entry name" value="OS10G0509000 PROTEIN-RELATED"/>
    <property type="match status" value="1"/>
</dbReference>
<dbReference type="PANTHER" id="PTHR48466:SF1">
    <property type="entry name" value="SMR DOMAIN-CONTAINING PROTEIN"/>
    <property type="match status" value="1"/>
</dbReference>
<dbReference type="Pfam" id="PF20297">
    <property type="entry name" value="MSSS"/>
    <property type="match status" value="1"/>
</dbReference>
<dbReference type="Pfam" id="PF00488">
    <property type="entry name" value="MutS_V"/>
    <property type="match status" value="1"/>
</dbReference>
<dbReference type="Pfam" id="PF01713">
    <property type="entry name" value="Smr"/>
    <property type="match status" value="1"/>
</dbReference>
<dbReference type="PIRSF" id="PIRSF005814">
    <property type="entry name" value="MutS_YshD"/>
    <property type="match status" value="1"/>
</dbReference>
<dbReference type="SMART" id="SM00382">
    <property type="entry name" value="AAA"/>
    <property type="match status" value="1"/>
</dbReference>
<dbReference type="SMART" id="SM00534">
    <property type="entry name" value="MUTSac"/>
    <property type="match status" value="1"/>
</dbReference>
<dbReference type="SMART" id="SM00533">
    <property type="entry name" value="MUTSd"/>
    <property type="match status" value="1"/>
</dbReference>
<dbReference type="SMART" id="SM00463">
    <property type="entry name" value="SMR"/>
    <property type="match status" value="1"/>
</dbReference>
<dbReference type="SUPFAM" id="SSF48334">
    <property type="entry name" value="DNA repair protein MutS, domain III"/>
    <property type="match status" value="1"/>
</dbReference>
<dbReference type="SUPFAM" id="SSF52540">
    <property type="entry name" value="P-loop containing nucleoside triphosphate hydrolases"/>
    <property type="match status" value="1"/>
</dbReference>
<dbReference type="SUPFAM" id="SSF160443">
    <property type="entry name" value="SMR domain-like"/>
    <property type="match status" value="1"/>
</dbReference>
<dbReference type="PROSITE" id="PS00486">
    <property type="entry name" value="DNA_MISMATCH_REPAIR_2"/>
    <property type="match status" value="1"/>
</dbReference>
<dbReference type="PROSITE" id="PS50828">
    <property type="entry name" value="SMR"/>
    <property type="match status" value="1"/>
</dbReference>
<evidence type="ECO:0000255" key="1">
    <source>
        <dbReference type="HAMAP-Rule" id="MF_00092"/>
    </source>
</evidence>
<evidence type="ECO:0000269" key="2">
    <source>
    </source>
</evidence>
<evidence type="ECO:0000269" key="3">
    <source>
    </source>
</evidence>
<evidence type="ECO:0000269" key="4">
    <source>
    </source>
</evidence>
<evidence type="ECO:0000269" key="5">
    <source>
    </source>
</evidence>
<evidence type="ECO:0000303" key="6">
    <source>
    </source>
</evidence>
<evidence type="ECO:0007829" key="7">
    <source>
        <dbReference type="PDB" id="2ZQE"/>
    </source>
</evidence>
<evidence type="ECO:0007829" key="8">
    <source>
        <dbReference type="PDB" id="7VUF"/>
    </source>
</evidence>
<evidence type="ECO:0007829" key="9">
    <source>
        <dbReference type="PDB" id="7VUK"/>
    </source>
</evidence>
<feature type="chain" id="PRO_0000423737" description="Endonuclease MutS2">
    <location>
        <begin position="1"/>
        <end position="744"/>
    </location>
</feature>
<feature type="domain" description="Smr" evidence="1">
    <location>
        <begin position="668"/>
        <end position="743"/>
    </location>
</feature>
<feature type="binding site" evidence="1">
    <location>
        <begin position="315"/>
        <end position="322"/>
    </location>
    <ligand>
        <name>ATP</name>
        <dbReference type="ChEBI" id="CHEBI:30616"/>
    </ligand>
</feature>
<feature type="mutagenesis site" description="140-fold decrease in endonuclease activity." evidence="3">
    <original>H</original>
    <variation>A</variation>
    <location>
        <position position="701"/>
    </location>
</feature>
<feature type="helix" evidence="8">
    <location>
        <begin position="4"/>
        <end position="7"/>
    </location>
</feature>
<feature type="helix" evidence="8">
    <location>
        <begin position="10"/>
        <end position="19"/>
    </location>
</feature>
<feature type="helix" evidence="8">
    <location>
        <begin position="24"/>
        <end position="31"/>
    </location>
</feature>
<feature type="helix" evidence="8">
    <location>
        <begin position="38"/>
        <end position="53"/>
    </location>
</feature>
<feature type="helix" evidence="8">
    <location>
        <begin position="61"/>
        <end position="72"/>
    </location>
</feature>
<feature type="strand" evidence="8">
    <location>
        <begin position="79"/>
        <end position="81"/>
    </location>
</feature>
<feature type="helix" evidence="8">
    <location>
        <begin position="82"/>
        <end position="99"/>
    </location>
</feature>
<feature type="helix" evidence="8">
    <location>
        <begin position="100"/>
        <end position="102"/>
    </location>
</feature>
<feature type="helix" evidence="8">
    <location>
        <begin position="105"/>
        <end position="110"/>
    </location>
</feature>
<feature type="helix" evidence="8">
    <location>
        <begin position="117"/>
        <end position="126"/>
    </location>
</feature>
<feature type="strand" evidence="8">
    <location>
        <begin position="129"/>
        <end position="131"/>
    </location>
</feature>
<feature type="helix" evidence="8">
    <location>
        <begin position="135"/>
        <end position="137"/>
    </location>
</feature>
<feature type="helix" evidence="8">
    <location>
        <begin position="139"/>
        <end position="158"/>
    </location>
</feature>
<feature type="turn" evidence="8">
    <location>
        <begin position="162"/>
        <end position="164"/>
    </location>
</feature>
<feature type="strand" evidence="8">
    <location>
        <begin position="176"/>
        <end position="178"/>
    </location>
</feature>
<feature type="strand" evidence="8">
    <location>
        <begin position="181"/>
        <end position="185"/>
    </location>
</feature>
<feature type="helix" evidence="8">
    <location>
        <begin position="191"/>
        <end position="193"/>
    </location>
</feature>
<feature type="strand" evidence="8">
    <location>
        <begin position="196"/>
        <end position="200"/>
    </location>
</feature>
<feature type="strand" evidence="8">
    <location>
        <begin position="209"/>
        <end position="212"/>
    </location>
</feature>
<feature type="helix" evidence="8">
    <location>
        <begin position="213"/>
        <end position="215"/>
    </location>
</feature>
<feature type="helix" evidence="8">
    <location>
        <begin position="216"/>
        <end position="246"/>
    </location>
</feature>
<feature type="helix" evidence="8">
    <location>
        <begin position="250"/>
        <end position="273"/>
    </location>
</feature>
<feature type="strand" evidence="8">
    <location>
        <begin position="282"/>
        <end position="289"/>
    </location>
</feature>
<feature type="strand" evidence="8">
    <location>
        <begin position="300"/>
        <end position="304"/>
    </location>
</feature>
<feature type="strand" evidence="8">
    <location>
        <begin position="306"/>
        <end position="308"/>
    </location>
</feature>
<feature type="strand" evidence="8">
    <location>
        <begin position="310"/>
        <end position="314"/>
    </location>
</feature>
<feature type="strand" evidence="9">
    <location>
        <begin position="317"/>
        <end position="320"/>
    </location>
</feature>
<feature type="helix" evidence="8">
    <location>
        <begin position="321"/>
        <end position="336"/>
    </location>
</feature>
<feature type="strand" evidence="8">
    <location>
        <begin position="341"/>
        <end position="348"/>
    </location>
</feature>
<feature type="strand" evidence="8">
    <location>
        <begin position="354"/>
        <end position="357"/>
    </location>
</feature>
<feature type="helix" evidence="8">
    <location>
        <begin position="368"/>
        <end position="384"/>
    </location>
</feature>
<feature type="strand" evidence="8">
    <location>
        <begin position="390"/>
        <end position="393"/>
    </location>
</feature>
<feature type="turn" evidence="8">
    <location>
        <begin position="396"/>
        <end position="399"/>
    </location>
</feature>
<feature type="helix" evidence="8">
    <location>
        <begin position="402"/>
        <end position="419"/>
    </location>
</feature>
<feature type="strand" evidence="8">
    <location>
        <begin position="422"/>
        <end position="427"/>
    </location>
</feature>
<feature type="helix" evidence="8">
    <location>
        <begin position="430"/>
        <end position="437"/>
    </location>
</feature>
<feature type="strand" evidence="8">
    <location>
        <begin position="442"/>
        <end position="450"/>
    </location>
</feature>
<feature type="turn" evidence="8">
    <location>
        <begin position="451"/>
        <end position="454"/>
    </location>
</feature>
<feature type="strand" evidence="8">
    <location>
        <begin position="455"/>
        <end position="463"/>
    </location>
</feature>
<feature type="helix" evidence="8">
    <location>
        <begin position="471"/>
        <end position="476"/>
    </location>
</feature>
<feature type="turn" evidence="8">
    <location>
        <begin position="481"/>
        <end position="485"/>
    </location>
</feature>
<feature type="strand" evidence="7">
    <location>
        <begin position="667"/>
        <end position="669"/>
    </location>
</feature>
<feature type="helix" evidence="7">
    <location>
        <begin position="675"/>
        <end position="691"/>
    </location>
</feature>
<feature type="strand" evidence="7">
    <location>
        <begin position="695"/>
        <end position="700"/>
    </location>
</feature>
<feature type="helix" evidence="7">
    <location>
        <begin position="707"/>
        <end position="718"/>
    </location>
</feature>
<feature type="strand" evidence="7">
    <location>
        <begin position="722"/>
        <end position="727"/>
    </location>
</feature>
<feature type="turn" evidence="7">
    <location>
        <begin position="730"/>
        <end position="733"/>
    </location>
</feature>
<feature type="helix" evidence="7">
    <location>
        <begin position="734"/>
        <end position="736"/>
    </location>
</feature>
<feature type="strand" evidence="7">
    <location>
        <begin position="737"/>
        <end position="742"/>
    </location>
</feature>
<comment type="function">
    <text evidence="1 2 3 4 5">Endonuclease that is involved in the suppression of homologous recombination and may thus have a key role in the control of bacterial genetic diversity. Cleaves the phosphate backbone of oligodeoxynucleotides non-sequence-specifically at the 3' side of the phosphates (PubMed:17686785). Preferably incises the branched DNA structures, especially the D-loop structure over the Holliday junction. Has ATPase activity (PubMed:15113836, PubMed:17215294). Binds to dsDNA but not to ssDNA.</text>
</comment>
<comment type="function">
    <text evidence="1">Acts as a ribosome collision sensor, splitting the ribosome into its 2 subunits. Detects stalled/collided 70S ribosomes which it binds and splits by an ATP-hydrolysis driven conformational change. Acts upstream of the ribosome quality control system (RQC), a ribosome-associated complex that mediates the extraction of incompletely synthesized nascent chains from stalled ribosomes and their subsequent degradation. Probably generates substrates for RQC.</text>
</comment>
<comment type="activity regulation">
    <text evidence="2">Nuclease activity is stimulated by interaction with MutL (PubMed:15113836). ATPase activity is stimulated by dsDNA (PubMed:15113836).</text>
</comment>
<comment type="biophysicochemical properties">
    <kinetics>
        <KM evidence="3">48 uM for ATP</KM>
        <text evidence="3">kcat is 2.1 min(-1) for ATP.</text>
    </kinetics>
</comment>
<comment type="subunit">
    <text evidence="1 2 3">Homodimer (PubMed:15113836, PubMed:17215294). Interacts with MutL (PubMed:15113836). Binds to stalled ribosomes, contacting rRNA.</text>
</comment>
<comment type="domain">
    <text evidence="3 4">Contains an N-terminal DNA-binding domain, followed by a dimerization domain and a C-terminal domain, called the small MutS-related (Smr) domain, which is absent from MutS and contains the endonuclease activity (PubMed:17215294, PubMed:17686785). The Smr domain can also bind DNA.</text>
</comment>
<comment type="disruption phenotype">
    <text evidence="5">Disruption causes an increase in the frequency of recombination between perfectly matched sequences.</text>
</comment>
<comment type="similarity">
    <text evidence="1">Belongs to the DNA mismatch repair MutS family. MutS2 subfamily.</text>
</comment>